<dbReference type="EMBL" id="AM286415">
    <property type="protein sequence ID" value="CAL13916.1"/>
    <property type="molecule type" value="Genomic_DNA"/>
</dbReference>
<dbReference type="RefSeq" id="WP_004391407.1">
    <property type="nucleotide sequence ID" value="NC_008800.1"/>
</dbReference>
<dbReference type="RefSeq" id="YP_001008042.1">
    <property type="nucleotide sequence ID" value="NC_008800.1"/>
</dbReference>
<dbReference type="SMR" id="A1JS00"/>
<dbReference type="GeneID" id="97454257"/>
<dbReference type="KEGG" id="yen:YE3897"/>
<dbReference type="PATRIC" id="fig|393305.7.peg.4147"/>
<dbReference type="eggNOG" id="COG0203">
    <property type="taxonomic scope" value="Bacteria"/>
</dbReference>
<dbReference type="HOGENOM" id="CLU_074407_2_0_6"/>
<dbReference type="OrthoDB" id="9809073at2"/>
<dbReference type="Proteomes" id="UP000000642">
    <property type="component" value="Chromosome"/>
</dbReference>
<dbReference type="GO" id="GO:0022625">
    <property type="term" value="C:cytosolic large ribosomal subunit"/>
    <property type="evidence" value="ECO:0007669"/>
    <property type="project" value="TreeGrafter"/>
</dbReference>
<dbReference type="GO" id="GO:0003735">
    <property type="term" value="F:structural constituent of ribosome"/>
    <property type="evidence" value="ECO:0007669"/>
    <property type="project" value="InterPro"/>
</dbReference>
<dbReference type="GO" id="GO:0006412">
    <property type="term" value="P:translation"/>
    <property type="evidence" value="ECO:0007669"/>
    <property type="project" value="UniProtKB-UniRule"/>
</dbReference>
<dbReference type="FunFam" id="3.90.1030.10:FF:000001">
    <property type="entry name" value="50S ribosomal protein L17"/>
    <property type="match status" value="1"/>
</dbReference>
<dbReference type="Gene3D" id="3.90.1030.10">
    <property type="entry name" value="Ribosomal protein L17"/>
    <property type="match status" value="1"/>
</dbReference>
<dbReference type="HAMAP" id="MF_01368">
    <property type="entry name" value="Ribosomal_bL17"/>
    <property type="match status" value="1"/>
</dbReference>
<dbReference type="InterPro" id="IPR000456">
    <property type="entry name" value="Ribosomal_bL17"/>
</dbReference>
<dbReference type="InterPro" id="IPR047859">
    <property type="entry name" value="Ribosomal_bL17_CS"/>
</dbReference>
<dbReference type="InterPro" id="IPR036373">
    <property type="entry name" value="Ribosomal_bL17_sf"/>
</dbReference>
<dbReference type="NCBIfam" id="TIGR00059">
    <property type="entry name" value="L17"/>
    <property type="match status" value="1"/>
</dbReference>
<dbReference type="PANTHER" id="PTHR14413:SF16">
    <property type="entry name" value="LARGE RIBOSOMAL SUBUNIT PROTEIN BL17M"/>
    <property type="match status" value="1"/>
</dbReference>
<dbReference type="PANTHER" id="PTHR14413">
    <property type="entry name" value="RIBOSOMAL PROTEIN L17"/>
    <property type="match status" value="1"/>
</dbReference>
<dbReference type="Pfam" id="PF01196">
    <property type="entry name" value="Ribosomal_L17"/>
    <property type="match status" value="1"/>
</dbReference>
<dbReference type="SUPFAM" id="SSF64263">
    <property type="entry name" value="Prokaryotic ribosomal protein L17"/>
    <property type="match status" value="1"/>
</dbReference>
<dbReference type="PROSITE" id="PS01167">
    <property type="entry name" value="RIBOSOMAL_L17"/>
    <property type="match status" value="1"/>
</dbReference>
<proteinExistence type="inferred from homology"/>
<organism>
    <name type="scientific">Yersinia enterocolitica serotype O:8 / biotype 1B (strain NCTC 13174 / 8081)</name>
    <dbReference type="NCBI Taxonomy" id="393305"/>
    <lineage>
        <taxon>Bacteria</taxon>
        <taxon>Pseudomonadati</taxon>
        <taxon>Pseudomonadota</taxon>
        <taxon>Gammaproteobacteria</taxon>
        <taxon>Enterobacterales</taxon>
        <taxon>Yersiniaceae</taxon>
        <taxon>Yersinia</taxon>
    </lineage>
</organism>
<gene>
    <name evidence="1" type="primary">rplQ</name>
    <name type="ordered locus">YE3897</name>
</gene>
<keyword id="KW-0687">Ribonucleoprotein</keyword>
<keyword id="KW-0689">Ribosomal protein</keyword>
<reference key="1">
    <citation type="journal article" date="2006" name="PLoS Genet.">
        <title>The complete genome sequence and comparative genome analysis of the high pathogenicity Yersinia enterocolitica strain 8081.</title>
        <authorList>
            <person name="Thomson N.R."/>
            <person name="Howard S."/>
            <person name="Wren B.W."/>
            <person name="Holden M.T.G."/>
            <person name="Crossman L."/>
            <person name="Challis G.L."/>
            <person name="Churcher C."/>
            <person name="Mungall K."/>
            <person name="Brooks K."/>
            <person name="Chillingworth T."/>
            <person name="Feltwell T."/>
            <person name="Abdellah Z."/>
            <person name="Hauser H."/>
            <person name="Jagels K."/>
            <person name="Maddison M."/>
            <person name="Moule S."/>
            <person name="Sanders M."/>
            <person name="Whitehead S."/>
            <person name="Quail M.A."/>
            <person name="Dougan G."/>
            <person name="Parkhill J."/>
            <person name="Prentice M.B."/>
        </authorList>
    </citation>
    <scope>NUCLEOTIDE SEQUENCE [LARGE SCALE GENOMIC DNA]</scope>
    <source>
        <strain>NCTC 13174 / 8081</strain>
    </source>
</reference>
<protein>
    <recommendedName>
        <fullName evidence="1">Large ribosomal subunit protein bL17</fullName>
    </recommendedName>
    <alternativeName>
        <fullName evidence="2">50S ribosomal protein L17</fullName>
    </alternativeName>
</protein>
<feature type="chain" id="PRO_1000055995" description="Large ribosomal subunit protein bL17">
    <location>
        <begin position="1"/>
        <end position="129"/>
    </location>
</feature>
<comment type="subunit">
    <text evidence="1">Part of the 50S ribosomal subunit. Contacts protein L32.</text>
</comment>
<comment type="similarity">
    <text evidence="1">Belongs to the bacterial ribosomal protein bL17 family.</text>
</comment>
<name>RL17_YERE8</name>
<accession>A1JS00</accession>
<sequence length="129" mass="14505">MRHRKSGRQLNRNSSHRQAMFRNMAGSLVRHEIIKTTLPKAKELRRVVEPLITLAKTDSVANRRLAFARTRDNEIVAKLFNELGPRFASRAGGYTRILKCGFRAGDNAPMAYIELVDRAASQAEVVAAE</sequence>
<evidence type="ECO:0000255" key="1">
    <source>
        <dbReference type="HAMAP-Rule" id="MF_01368"/>
    </source>
</evidence>
<evidence type="ECO:0000305" key="2"/>